<dbReference type="EC" id="2.7.7.6" evidence="1"/>
<dbReference type="EMBL" id="CP000510">
    <property type="protein sequence ID" value="ABM05307.1"/>
    <property type="molecule type" value="Genomic_DNA"/>
</dbReference>
<dbReference type="RefSeq" id="WP_011771855.1">
    <property type="nucleotide sequence ID" value="NC_008709.1"/>
</dbReference>
<dbReference type="SMR" id="A1T0P2"/>
<dbReference type="STRING" id="357804.Ping_3624"/>
<dbReference type="KEGG" id="pin:Ping_3624"/>
<dbReference type="eggNOG" id="COG1758">
    <property type="taxonomic scope" value="Bacteria"/>
</dbReference>
<dbReference type="HOGENOM" id="CLU_125406_5_3_6"/>
<dbReference type="OrthoDB" id="9796300at2"/>
<dbReference type="Proteomes" id="UP000000639">
    <property type="component" value="Chromosome"/>
</dbReference>
<dbReference type="GO" id="GO:0000428">
    <property type="term" value="C:DNA-directed RNA polymerase complex"/>
    <property type="evidence" value="ECO:0007669"/>
    <property type="project" value="UniProtKB-KW"/>
</dbReference>
<dbReference type="GO" id="GO:0003677">
    <property type="term" value="F:DNA binding"/>
    <property type="evidence" value="ECO:0007669"/>
    <property type="project" value="UniProtKB-UniRule"/>
</dbReference>
<dbReference type="GO" id="GO:0003899">
    <property type="term" value="F:DNA-directed RNA polymerase activity"/>
    <property type="evidence" value="ECO:0007669"/>
    <property type="project" value="UniProtKB-UniRule"/>
</dbReference>
<dbReference type="GO" id="GO:0006351">
    <property type="term" value="P:DNA-templated transcription"/>
    <property type="evidence" value="ECO:0007669"/>
    <property type="project" value="UniProtKB-UniRule"/>
</dbReference>
<dbReference type="Gene3D" id="3.90.940.10">
    <property type="match status" value="1"/>
</dbReference>
<dbReference type="HAMAP" id="MF_00366">
    <property type="entry name" value="RNApol_bact_RpoZ"/>
    <property type="match status" value="1"/>
</dbReference>
<dbReference type="InterPro" id="IPR003716">
    <property type="entry name" value="DNA-dir_RNA_pol_omega"/>
</dbReference>
<dbReference type="InterPro" id="IPR006110">
    <property type="entry name" value="Pol_omega/Rpo6/RPB6"/>
</dbReference>
<dbReference type="InterPro" id="IPR036161">
    <property type="entry name" value="RPB6/omega-like_sf"/>
</dbReference>
<dbReference type="NCBIfam" id="TIGR00690">
    <property type="entry name" value="rpoZ"/>
    <property type="match status" value="1"/>
</dbReference>
<dbReference type="PANTHER" id="PTHR34476">
    <property type="entry name" value="DNA-DIRECTED RNA POLYMERASE SUBUNIT OMEGA"/>
    <property type="match status" value="1"/>
</dbReference>
<dbReference type="PANTHER" id="PTHR34476:SF1">
    <property type="entry name" value="DNA-DIRECTED RNA POLYMERASE SUBUNIT OMEGA"/>
    <property type="match status" value="1"/>
</dbReference>
<dbReference type="Pfam" id="PF01192">
    <property type="entry name" value="RNA_pol_Rpb6"/>
    <property type="match status" value="1"/>
</dbReference>
<dbReference type="SMART" id="SM01409">
    <property type="entry name" value="RNA_pol_Rpb6"/>
    <property type="match status" value="1"/>
</dbReference>
<dbReference type="SUPFAM" id="SSF63562">
    <property type="entry name" value="RPB6/omega subunit-like"/>
    <property type="match status" value="1"/>
</dbReference>
<comment type="function">
    <text evidence="1">Promotes RNA polymerase assembly. Latches the N- and C-terminal regions of the beta' subunit thereby facilitating its interaction with the beta and alpha subunits.</text>
</comment>
<comment type="catalytic activity">
    <reaction evidence="1">
        <text>RNA(n) + a ribonucleoside 5'-triphosphate = RNA(n+1) + diphosphate</text>
        <dbReference type="Rhea" id="RHEA:21248"/>
        <dbReference type="Rhea" id="RHEA-COMP:14527"/>
        <dbReference type="Rhea" id="RHEA-COMP:17342"/>
        <dbReference type="ChEBI" id="CHEBI:33019"/>
        <dbReference type="ChEBI" id="CHEBI:61557"/>
        <dbReference type="ChEBI" id="CHEBI:140395"/>
        <dbReference type="EC" id="2.7.7.6"/>
    </reaction>
</comment>
<comment type="subunit">
    <text evidence="1">The RNAP catalytic core consists of 2 alpha, 1 beta, 1 beta' and 1 omega subunit. When a sigma factor is associated with the core the holoenzyme is formed, which can initiate transcription.</text>
</comment>
<comment type="similarity">
    <text evidence="1">Belongs to the RNA polymerase subunit omega family.</text>
</comment>
<evidence type="ECO:0000255" key="1">
    <source>
        <dbReference type="HAMAP-Rule" id="MF_00366"/>
    </source>
</evidence>
<gene>
    <name evidence="1" type="primary">rpoZ</name>
    <name type="ordered locus">Ping_3624</name>
</gene>
<sequence length="91" mass="10094">MARVTVEDAVNVVGNRFDLILMASRRARQLATQGKTPLVDPENDKPTVIALREIEENLITNELMDIQDRQEKHEKQTAELAAVAAIAEGRG</sequence>
<protein>
    <recommendedName>
        <fullName evidence="1">DNA-directed RNA polymerase subunit omega</fullName>
        <shortName evidence="1">RNAP omega subunit</shortName>
        <ecNumber evidence="1">2.7.7.6</ecNumber>
    </recommendedName>
    <alternativeName>
        <fullName evidence="1">RNA polymerase omega subunit</fullName>
    </alternativeName>
    <alternativeName>
        <fullName evidence="1">Transcriptase subunit omega</fullName>
    </alternativeName>
</protein>
<accession>A1T0P2</accession>
<reference key="1">
    <citation type="journal article" date="2008" name="BMC Genomics">
        <title>Genomics of an extreme psychrophile, Psychromonas ingrahamii.</title>
        <authorList>
            <person name="Riley M."/>
            <person name="Staley J.T."/>
            <person name="Danchin A."/>
            <person name="Wang T.Z."/>
            <person name="Brettin T.S."/>
            <person name="Hauser L.J."/>
            <person name="Land M.L."/>
            <person name="Thompson L.S."/>
        </authorList>
    </citation>
    <scope>NUCLEOTIDE SEQUENCE [LARGE SCALE GENOMIC DNA]</scope>
    <source>
        <strain>DSM 17664 / CCUG 51855 / 37</strain>
    </source>
</reference>
<keyword id="KW-0240">DNA-directed RNA polymerase</keyword>
<keyword id="KW-0548">Nucleotidyltransferase</keyword>
<keyword id="KW-1185">Reference proteome</keyword>
<keyword id="KW-0804">Transcription</keyword>
<keyword id="KW-0808">Transferase</keyword>
<name>RPOZ_PSYIN</name>
<organism>
    <name type="scientific">Psychromonas ingrahamii (strain DSM 17664 / CCUG 51855 / 37)</name>
    <dbReference type="NCBI Taxonomy" id="357804"/>
    <lineage>
        <taxon>Bacteria</taxon>
        <taxon>Pseudomonadati</taxon>
        <taxon>Pseudomonadota</taxon>
        <taxon>Gammaproteobacteria</taxon>
        <taxon>Alteromonadales</taxon>
        <taxon>Psychromonadaceae</taxon>
        <taxon>Psychromonas</taxon>
    </lineage>
</organism>
<proteinExistence type="inferred from homology"/>
<feature type="chain" id="PRO_1000005985" description="DNA-directed RNA polymerase subunit omega">
    <location>
        <begin position="1"/>
        <end position="91"/>
    </location>
</feature>